<evidence type="ECO:0000250" key="1"/>
<evidence type="ECO:0000250" key="2">
    <source>
        <dbReference type="UniProtKB" id="Q12441"/>
    </source>
</evidence>
<evidence type="ECO:0000256" key="3">
    <source>
        <dbReference type="SAM" id="MobiDB-lite"/>
    </source>
</evidence>
<evidence type="ECO:0000269" key="4">
    <source>
    </source>
</evidence>
<protein>
    <recommendedName>
        <fullName>Transposon Ty1-GR2 Gag polyprotein</fullName>
    </recommendedName>
    <alternativeName>
        <fullName>Gag-p49</fullName>
    </alternativeName>
    <alternativeName>
        <fullName>Transposon Ty1 protein A</fullName>
        <shortName>TY1A</shortName>
        <shortName>TYA</shortName>
    </alternativeName>
    <alternativeName>
        <fullName>p58</fullName>
    </alternativeName>
    <component>
        <recommendedName>
            <fullName>Capsid protein</fullName>
            <shortName>CA</shortName>
        </recommendedName>
        <alternativeName>
            <fullName>Gag-p45</fullName>
        </alternativeName>
        <alternativeName>
            <fullName>p54</fullName>
        </alternativeName>
    </component>
    <component>
        <recommendedName>
            <fullName>Gag-p4</fullName>
        </recommendedName>
    </component>
</protein>
<keyword id="KW-0963">Cytoplasm</keyword>
<keyword id="KW-0597">Phosphoprotein</keyword>
<keyword id="KW-1185">Reference proteome</keyword>
<keyword id="KW-0688">Ribosomal frameshifting</keyword>
<keyword id="KW-0694">RNA-binding</keyword>
<keyword id="KW-0814">Transposable element</keyword>
<organism>
    <name type="scientific">Saccharomyces cerevisiae (strain ATCC 204508 / S288c)</name>
    <name type="common">Baker's yeast</name>
    <dbReference type="NCBI Taxonomy" id="559292"/>
    <lineage>
        <taxon>Eukaryota</taxon>
        <taxon>Fungi</taxon>
        <taxon>Dikarya</taxon>
        <taxon>Ascomycota</taxon>
        <taxon>Saccharomycotina</taxon>
        <taxon>Saccharomycetes</taxon>
        <taxon>Saccharomycetales</taxon>
        <taxon>Saccharomycetaceae</taxon>
        <taxon>Saccharomyces</taxon>
    </lineage>
</organism>
<name>YG12A_YEAST</name>
<sequence>MESQQLSQHSHISHGSACASVTSKEVHTNQDPLDVSASKIQEYDKASTKANSQQTTTPASSAVPENPHHASPQPASVPPPQNGPYPQQCMMTQNQANPSGWSFYGHPSMIPYTPYQMSPMYFPPGPQSQFPQYPSSVGTPLSTPSPESGNTFTDSSSADSDMTSTKKYVRPPPMLTSPNDFPNWVKTYIKFLQNSNLGGIIPTVNGKPVRQITDDELTFLYNTFQIFAPSQFLPTWVKDILSVDYTDIMKILSKSIEKMQSDTQEANDIVTLANLQYNGSTPADAFETKVTNIIDRLNNNGIHINNKVACQLIMRGLSGEYKFLRYTRHRHLNMTVAELFLDIHAIYEEQQGSRNSKPNYRRNPSDEKNDSRSYTNTTKPKVIARNPQKTNNSKSKTARAHNVSTSNNSPSTDNDSISKSTTEPIQLNNKHDLHLRPGTY</sequence>
<dbReference type="EMBL" id="Z72823">
    <property type="protein sequence ID" value="CAA97028.1"/>
    <property type="molecule type" value="Genomic_DNA"/>
</dbReference>
<dbReference type="EMBL" id="Z72824">
    <property type="protein sequence ID" value="CAA97036.1"/>
    <property type="molecule type" value="Genomic_DNA"/>
</dbReference>
<dbReference type="EMBL" id="BK006941">
    <property type="protein sequence ID" value="DAA08138.1"/>
    <property type="molecule type" value="Genomic_DNA"/>
</dbReference>
<dbReference type="PIR" id="S69840">
    <property type="entry name" value="S69840"/>
</dbReference>
<dbReference type="RefSeq" id="NP_058161.1">
    <molecule id="Q12485-1"/>
    <property type="nucleotide sequence ID" value="NM_001184433.1"/>
</dbReference>
<dbReference type="SMR" id="Q12485"/>
<dbReference type="BioGRID" id="33286">
    <property type="interactions" value="14"/>
</dbReference>
<dbReference type="FunCoup" id="Q12485">
    <property type="interactions" value="66"/>
</dbReference>
<dbReference type="GlyGen" id="Q12485">
    <property type="glycosylation" value="2 sites"/>
</dbReference>
<dbReference type="iPTMnet" id="Q12485"/>
<dbReference type="PaxDb" id="4932-YGR038C-A"/>
<dbReference type="PeptideAtlas" id="Q12485"/>
<dbReference type="GeneID" id="852929"/>
<dbReference type="KEGG" id="sce:YGR038C-A"/>
<dbReference type="AGR" id="SGD:S000007407"/>
<dbReference type="SGD" id="S000007407">
    <property type="gene designation" value="YGR038C-A"/>
</dbReference>
<dbReference type="VEuPathDB" id="FungiDB:YGR038C-A"/>
<dbReference type="eggNOG" id="KOG0017">
    <property type="taxonomic scope" value="Eukaryota"/>
</dbReference>
<dbReference type="HOGENOM" id="CLU_045291_1_0_1"/>
<dbReference type="InParanoid" id="Q12485"/>
<dbReference type="OrthoDB" id="4046078at2759"/>
<dbReference type="Proteomes" id="UP000002311">
    <property type="component" value="Chromosome VII"/>
</dbReference>
<dbReference type="RNAct" id="Q12485">
    <property type="molecule type" value="protein"/>
</dbReference>
<dbReference type="GO" id="GO:0005737">
    <property type="term" value="C:cytoplasm"/>
    <property type="evidence" value="ECO:0007669"/>
    <property type="project" value="UniProtKB-SubCell"/>
</dbReference>
<dbReference type="GO" id="GO:0003723">
    <property type="term" value="F:RNA binding"/>
    <property type="evidence" value="ECO:0007669"/>
    <property type="project" value="UniProtKB-KW"/>
</dbReference>
<dbReference type="GO" id="GO:0075523">
    <property type="term" value="P:viral translational frameshifting"/>
    <property type="evidence" value="ECO:0007669"/>
    <property type="project" value="UniProtKB-KW"/>
</dbReference>
<dbReference type="InterPro" id="IPR015820">
    <property type="entry name" value="TYA"/>
</dbReference>
<dbReference type="Pfam" id="PF01021">
    <property type="entry name" value="TYA"/>
    <property type="match status" value="1"/>
</dbReference>
<feature type="chain" id="PRO_0000279066" description="Transposon Ty1-GR2 Gag polyprotein">
    <location>
        <begin position="1"/>
        <end position="440"/>
    </location>
</feature>
<feature type="chain" id="PRO_0000279067" description="Capsid protein" evidence="1">
    <location>
        <begin position="1"/>
        <end position="401"/>
    </location>
</feature>
<feature type="peptide" id="PRO_0000279068" description="Gag-p4" evidence="1">
    <location>
        <begin position="402"/>
        <end position="440"/>
    </location>
</feature>
<feature type="region of interest" description="Disordered" evidence="3">
    <location>
        <begin position="1"/>
        <end position="93"/>
    </location>
</feature>
<feature type="region of interest" description="Disordered" evidence="3">
    <location>
        <begin position="126"/>
        <end position="173"/>
    </location>
</feature>
<feature type="region of interest" description="RNA-binding" evidence="1">
    <location>
        <begin position="299"/>
        <end position="401"/>
    </location>
</feature>
<feature type="region of interest" description="Disordered" evidence="3">
    <location>
        <begin position="352"/>
        <end position="440"/>
    </location>
</feature>
<feature type="compositionally biased region" description="Low complexity" evidence="3">
    <location>
        <begin position="1"/>
        <end position="16"/>
    </location>
</feature>
<feature type="compositionally biased region" description="Polar residues" evidence="3">
    <location>
        <begin position="48"/>
        <end position="60"/>
    </location>
</feature>
<feature type="compositionally biased region" description="Polar residues" evidence="3">
    <location>
        <begin position="127"/>
        <end position="152"/>
    </location>
</feature>
<feature type="compositionally biased region" description="Low complexity" evidence="3">
    <location>
        <begin position="153"/>
        <end position="165"/>
    </location>
</feature>
<feature type="compositionally biased region" description="Low complexity" evidence="3">
    <location>
        <begin position="402"/>
        <end position="418"/>
    </location>
</feature>
<feature type="compositionally biased region" description="Polar residues" evidence="3">
    <location>
        <begin position="419"/>
        <end position="428"/>
    </location>
</feature>
<feature type="compositionally biased region" description="Basic and acidic residues" evidence="3">
    <location>
        <begin position="429"/>
        <end position="440"/>
    </location>
</feature>
<feature type="site" description="Cleavage; by Ty1 protease" evidence="1">
    <location>
        <begin position="401"/>
        <end position="402"/>
    </location>
</feature>
<feature type="modified residue" description="Phosphoserine" evidence="2">
    <location>
        <position position="416"/>
    </location>
</feature>
<accession>Q12485</accession>
<accession>D6VUH7</accession>
<proteinExistence type="evidence at transcript level"/>
<reference key="1">
    <citation type="journal article" date="1997" name="Nature">
        <title>The nucleotide sequence of Saccharomyces cerevisiae chromosome VII.</title>
        <authorList>
            <person name="Tettelin H."/>
            <person name="Agostoni-Carbone M.L."/>
            <person name="Albermann K."/>
            <person name="Albers M."/>
            <person name="Arroyo J."/>
            <person name="Backes U."/>
            <person name="Barreiros T."/>
            <person name="Bertani I."/>
            <person name="Bjourson A.J."/>
            <person name="Brueckner M."/>
            <person name="Bruschi C.V."/>
            <person name="Carignani G."/>
            <person name="Castagnoli L."/>
            <person name="Cerdan E."/>
            <person name="Clemente M.L."/>
            <person name="Coblenz A."/>
            <person name="Coglievina M."/>
            <person name="Coissac E."/>
            <person name="Defoor E."/>
            <person name="Del Bino S."/>
            <person name="Delius H."/>
            <person name="Delneri D."/>
            <person name="de Wergifosse P."/>
            <person name="Dujon B."/>
            <person name="Durand P."/>
            <person name="Entian K.-D."/>
            <person name="Eraso P."/>
            <person name="Escribano V."/>
            <person name="Fabiani L."/>
            <person name="Fartmann B."/>
            <person name="Feroli F."/>
            <person name="Feuermann M."/>
            <person name="Frontali L."/>
            <person name="Garcia-Gonzalez M."/>
            <person name="Garcia-Saez M.I."/>
            <person name="Goffeau A."/>
            <person name="Guerreiro P."/>
            <person name="Hani J."/>
            <person name="Hansen M."/>
            <person name="Hebling U."/>
            <person name="Hernandez K."/>
            <person name="Heumann K."/>
            <person name="Hilger F."/>
            <person name="Hofmann B."/>
            <person name="Indge K.J."/>
            <person name="James C.M."/>
            <person name="Klima R."/>
            <person name="Koetter P."/>
            <person name="Kramer B."/>
            <person name="Kramer W."/>
            <person name="Lauquin G."/>
            <person name="Leuther H."/>
            <person name="Louis E.J."/>
            <person name="Maillier E."/>
            <person name="Marconi A."/>
            <person name="Martegani E."/>
            <person name="Mazon M.J."/>
            <person name="Mazzoni C."/>
            <person name="McReynolds A.D.K."/>
            <person name="Melchioretto P."/>
            <person name="Mewes H.-W."/>
            <person name="Minenkova O."/>
            <person name="Mueller-Auer S."/>
            <person name="Nawrocki A."/>
            <person name="Netter P."/>
            <person name="Neu R."/>
            <person name="Nombela C."/>
            <person name="Oliver S.G."/>
            <person name="Panzeri L."/>
            <person name="Paoluzi S."/>
            <person name="Plevani P."/>
            <person name="Portetelle D."/>
            <person name="Portillo F."/>
            <person name="Potier S."/>
            <person name="Purnelle B."/>
            <person name="Rieger M."/>
            <person name="Riles L."/>
            <person name="Rinaldi T."/>
            <person name="Robben J."/>
            <person name="Rodrigues-Pousada C."/>
            <person name="Rodriguez-Belmonte E."/>
            <person name="Rodriguez-Torres A.M."/>
            <person name="Rose M."/>
            <person name="Ruzzi M."/>
            <person name="Saliola M."/>
            <person name="Sanchez-Perez M."/>
            <person name="Schaefer B."/>
            <person name="Schaefer M."/>
            <person name="Scharfe M."/>
            <person name="Schmidheini T."/>
            <person name="Schreer A."/>
            <person name="Skala J."/>
            <person name="Souciet J.-L."/>
            <person name="Steensma H.Y."/>
            <person name="Talla E."/>
            <person name="Thierry A."/>
            <person name="Vandenbol M."/>
            <person name="van der Aart Q.J.M."/>
            <person name="Van Dyck L."/>
            <person name="Vanoni M."/>
            <person name="Verhasselt P."/>
            <person name="Voet M."/>
            <person name="Volckaert G."/>
            <person name="Wambutt R."/>
            <person name="Watson M.D."/>
            <person name="Weber N."/>
            <person name="Wedler E."/>
            <person name="Wedler H."/>
            <person name="Wipfli P."/>
            <person name="Wolf K."/>
            <person name="Wright L.F."/>
            <person name="Zaccaria P."/>
            <person name="Zimmermann M."/>
            <person name="Zollner A."/>
            <person name="Kleine K."/>
        </authorList>
    </citation>
    <scope>NUCLEOTIDE SEQUENCE [LARGE SCALE GENOMIC DNA]</scope>
    <source>
        <strain>ATCC 204508 / S288c</strain>
    </source>
</reference>
<reference key="2">
    <citation type="journal article" date="2014" name="G3 (Bethesda)">
        <title>The reference genome sequence of Saccharomyces cerevisiae: Then and now.</title>
        <authorList>
            <person name="Engel S.R."/>
            <person name="Dietrich F.S."/>
            <person name="Fisk D.G."/>
            <person name="Binkley G."/>
            <person name="Balakrishnan R."/>
            <person name="Costanzo M.C."/>
            <person name="Dwight S.S."/>
            <person name="Hitz B.C."/>
            <person name="Karra K."/>
            <person name="Nash R.S."/>
            <person name="Weng S."/>
            <person name="Wong E.D."/>
            <person name="Lloyd P."/>
            <person name="Skrzypek M.S."/>
            <person name="Miyasato S.R."/>
            <person name="Simison M."/>
            <person name="Cherry J.M."/>
        </authorList>
    </citation>
    <scope>GENOME REANNOTATION</scope>
    <source>
        <strain>ATCC 204508 / S288c</strain>
    </source>
</reference>
<reference key="3">
    <citation type="journal article" date="1998" name="Genome Res.">
        <title>Transposable elements and genome organization: a comprehensive survey of retrotransposons revealed by the complete Saccharomyces cerevisiae genome sequence.</title>
        <authorList>
            <person name="Kim J.M."/>
            <person name="Vanguri S."/>
            <person name="Boeke J.D."/>
            <person name="Gabriel A."/>
            <person name="Voytas D.F."/>
        </authorList>
    </citation>
    <scope>NOMENCLATURE</scope>
</reference>
<reference key="4">
    <citation type="journal article" date="2002" name="Mol. Cell. Biol.">
        <title>Differential effects of chromatin and Gcn4 on the 50-fold range of expression among individual yeast Ty1 retrotransposons.</title>
        <authorList>
            <person name="Morillon A."/>
            <person name="Benard L."/>
            <person name="Springer M."/>
            <person name="Lesage P."/>
        </authorList>
    </citation>
    <scope>INDUCTION</scope>
</reference>
<reference key="5">
    <citation type="journal article" date="2005" name="Cytogenet. Genome Res.">
        <title>Happy together: the life and times of Ty retrotransposons and their hosts.</title>
        <authorList>
            <person name="Lesage P."/>
            <person name="Todeschini A.L."/>
        </authorList>
    </citation>
    <scope>REVIEW</scope>
</reference>
<gene>
    <name type="primary">TY1A-GR2</name>
    <name type="synonym">YGRCTy1-2 GAG</name>
    <name type="ordered locus">YGR038C-A</name>
    <name type="ORF">G4128</name>
</gene>
<comment type="function">
    <text evidence="1">Capsid protein (CA) is the structural component of the virus-like particle (VLP), forming the shell that encapsulates the retrotransposons dimeric RNA genome. The particles are assembled from trimer-clustered units and there are holes in the capsid shells that allow for the diffusion of macromolecules. CA also has nucleocapsid-like chaperone activity, promoting primer tRNA(i)-Met annealing to the multipartite primer-binding site (PBS), dimerization of Ty1 RNA and initiation of reverse transcription (By similarity).</text>
</comment>
<comment type="subunit">
    <text evidence="1">Homotrimer.</text>
</comment>
<comment type="subcellular location">
    <subcellularLocation>
        <location evidence="1">Cytoplasm</location>
    </subcellularLocation>
</comment>
<comment type="alternative products">
    <event type="ribosomal frameshifting"/>
    <isoform>
        <id>Q12485-1</id>
        <name>Transposon Ty1-GR2 Gag polyprotein</name>
        <sequence type="displayed"/>
    </isoform>
    <isoform>
        <id>Q12269-1</id>
        <name>Transposon Ty1-GR2 Gag-Pol polyprotein</name>
        <sequence type="external"/>
    </isoform>
    <text evidence="1">The Gag-Pol polyprotein is generated by a +1 ribosomal frameshift. The ratio of Gag:Gag-Pol varies between 20:1 and 5:1 (By similarity).</text>
</comment>
<comment type="induction">
    <text evidence="4">Ty1-GR2 is a weakly expressed element. Induced under amino acid starvation conditions by GCN4.</text>
</comment>
<comment type="domain">
    <text evidence="1">The C-terminal RNA-binding region of CA is sufficient for all its nucleocapsid-like chaperone activities.</text>
</comment>
<comment type="miscellaneous">
    <text>Retrotransposons are mobile genetic entities that are able to replicate via an RNA intermediate and a reverse transcription step. In contrast to retroviruses, retrotransposons are non-infectious, lack an envelope and remain intracellular. Ty1 retrotransposons belong to the copia elements (pseudoviridae).</text>
</comment>
<comment type="miscellaneous">
    <molecule>Isoform Transposon Ty1-GR2 Gag polyprotein</molecule>
    <text>Produced by conventional translation.</text>
</comment>